<accession>Q9DFJ9</accession>
<sequence length="44" mass="4914">MSDKPDVKEVESFDKTTLKKTTTNEKNTLPTKEVIEQEKSGGSD</sequence>
<dbReference type="EMBL" id="AF266237">
    <property type="protein sequence ID" value="AAG13356.1"/>
    <property type="molecule type" value="mRNA"/>
</dbReference>
<dbReference type="SMR" id="Q9DFJ9"/>
<dbReference type="GO" id="GO:0005737">
    <property type="term" value="C:cytoplasm"/>
    <property type="evidence" value="ECO:0007669"/>
    <property type="project" value="UniProtKB-KW"/>
</dbReference>
<dbReference type="GO" id="GO:0005856">
    <property type="term" value="C:cytoskeleton"/>
    <property type="evidence" value="ECO:0007669"/>
    <property type="project" value="UniProtKB-SubCell"/>
</dbReference>
<dbReference type="GO" id="GO:0003785">
    <property type="term" value="F:actin monomer binding"/>
    <property type="evidence" value="ECO:0007669"/>
    <property type="project" value="InterPro"/>
</dbReference>
<dbReference type="GO" id="GO:0007015">
    <property type="term" value="P:actin filament organization"/>
    <property type="evidence" value="ECO:0007669"/>
    <property type="project" value="InterPro"/>
</dbReference>
<dbReference type="GO" id="GO:0030334">
    <property type="term" value="P:regulation of cell migration"/>
    <property type="evidence" value="ECO:0007669"/>
    <property type="project" value="TreeGrafter"/>
</dbReference>
<dbReference type="FunFam" id="1.20.5.520:FF:000001">
    <property type="entry name" value="Thymosin beta"/>
    <property type="match status" value="1"/>
</dbReference>
<dbReference type="Gene3D" id="1.20.5.520">
    <property type="entry name" value="Single helix bin"/>
    <property type="match status" value="1"/>
</dbReference>
<dbReference type="InterPro" id="IPR001152">
    <property type="entry name" value="Beta-thymosin"/>
</dbReference>
<dbReference type="InterPro" id="IPR038386">
    <property type="entry name" value="Beta-thymosin_sf"/>
</dbReference>
<dbReference type="PANTHER" id="PTHR12021">
    <property type="entry name" value="THYMOSIN BETA"/>
    <property type="match status" value="1"/>
</dbReference>
<dbReference type="PANTHER" id="PTHR12021:SF26">
    <property type="entry name" value="THYMOSIN BETA"/>
    <property type="match status" value="1"/>
</dbReference>
<dbReference type="Pfam" id="PF01290">
    <property type="entry name" value="Thymosin"/>
    <property type="match status" value="1"/>
</dbReference>
<dbReference type="PIRSF" id="PIRSF001828">
    <property type="entry name" value="Thymosin_beta"/>
    <property type="match status" value="1"/>
</dbReference>
<dbReference type="SMART" id="SM00152">
    <property type="entry name" value="THY"/>
    <property type="match status" value="1"/>
</dbReference>
<dbReference type="PROSITE" id="PS00500">
    <property type="entry name" value="THYMOSIN_B4"/>
    <property type="match status" value="1"/>
</dbReference>
<reference key="1">
    <citation type="journal article" date="2001" name="Proc. Natl. Acad. Sci. U.S.A.">
        <title>Hypoxia-induced gene expression profiling in the euryoxic fish Gillichthys mirabilis.</title>
        <authorList>
            <person name="Gracey A.Y."/>
            <person name="Troll J.V."/>
            <person name="Somero G.N."/>
        </authorList>
    </citation>
    <scope>NUCLEOTIDE SEQUENCE [MRNA]</scope>
    <source>
        <tissue>Brain</tissue>
    </source>
</reference>
<evidence type="ECO:0000250" key="1"/>
<evidence type="ECO:0000256" key="2">
    <source>
        <dbReference type="SAM" id="MobiDB-lite"/>
    </source>
</evidence>
<evidence type="ECO:0000305" key="3"/>
<comment type="function">
    <text evidence="1">Plays an important role in the organization of the cytoskeleton. Binds to and sequesters actin monomers (G actin) and therefore inhibits actin polymerization (By similarity).</text>
</comment>
<comment type="subcellular location">
    <subcellularLocation>
        <location evidence="1">Cytoplasm</location>
        <location evidence="1">Cytoskeleton</location>
    </subcellularLocation>
</comment>
<comment type="similarity">
    <text evidence="3">Belongs to the thymosin beta family.</text>
</comment>
<keyword id="KW-0009">Actin-binding</keyword>
<keyword id="KW-0963">Cytoplasm</keyword>
<keyword id="KW-0206">Cytoskeleton</keyword>
<feature type="initiator methionine" description="Removed" evidence="1">
    <location>
        <position position="1"/>
    </location>
</feature>
<feature type="chain" id="PRO_0000045937" description="Thymosin beta">
    <location>
        <begin position="2"/>
        <end position="44"/>
    </location>
</feature>
<feature type="region of interest" description="Disordered" evidence="2">
    <location>
        <begin position="1"/>
        <end position="44"/>
    </location>
</feature>
<feature type="compositionally biased region" description="Basic and acidic residues" evidence="2">
    <location>
        <begin position="1"/>
        <end position="17"/>
    </location>
</feature>
<feature type="compositionally biased region" description="Low complexity" evidence="2">
    <location>
        <begin position="19"/>
        <end position="32"/>
    </location>
</feature>
<feature type="compositionally biased region" description="Basic and acidic residues" evidence="2">
    <location>
        <begin position="33"/>
        <end position="44"/>
    </location>
</feature>
<name>TYB_GILMI</name>
<proteinExistence type="inferred from homology"/>
<protein>
    <recommendedName>
        <fullName>Thymosin beta</fullName>
    </recommendedName>
</protein>
<organism>
    <name type="scientific">Gillichthys mirabilis</name>
    <name type="common">Long-jawed mudsucker</name>
    <dbReference type="NCBI Taxonomy" id="8222"/>
    <lineage>
        <taxon>Eukaryota</taxon>
        <taxon>Metazoa</taxon>
        <taxon>Chordata</taxon>
        <taxon>Craniata</taxon>
        <taxon>Vertebrata</taxon>
        <taxon>Euteleostomi</taxon>
        <taxon>Actinopterygii</taxon>
        <taxon>Neopterygii</taxon>
        <taxon>Teleostei</taxon>
        <taxon>Neoteleostei</taxon>
        <taxon>Acanthomorphata</taxon>
        <taxon>Gobiaria</taxon>
        <taxon>Gobiiformes</taxon>
        <taxon>Gobioidei</taxon>
        <taxon>Gobiidae</taxon>
        <taxon>Gobionellinae</taxon>
        <taxon>Gillichthys</taxon>
    </lineage>
</organism>